<name>RM40_SCHPO</name>
<feature type="transit peptide" description="Mitochondrion" evidence="2">
    <location>
        <begin position="1"/>
        <end position="31"/>
    </location>
</feature>
<feature type="chain" id="PRO_0000116659" description="Large ribosomal subunit protein uL24m">
    <location>
        <begin position="32"/>
        <end position="279"/>
    </location>
</feature>
<feature type="domain" description="KOW" evidence="2">
    <location>
        <begin position="70"/>
        <end position="100"/>
    </location>
</feature>
<feature type="region of interest" description="Disordered" evidence="3">
    <location>
        <begin position="34"/>
        <end position="56"/>
    </location>
</feature>
<feature type="region of interest" description="Disordered" evidence="3">
    <location>
        <begin position="185"/>
        <end position="204"/>
    </location>
</feature>
<feature type="compositionally biased region" description="Basic and acidic residues" evidence="3">
    <location>
        <begin position="34"/>
        <end position="51"/>
    </location>
</feature>
<feature type="compositionally biased region" description="Basic and acidic residues" evidence="3">
    <location>
        <begin position="187"/>
        <end position="202"/>
    </location>
</feature>
<evidence type="ECO:0000250" key="1">
    <source>
        <dbReference type="UniProtKB" id="P36534"/>
    </source>
</evidence>
<evidence type="ECO:0000255" key="2"/>
<evidence type="ECO:0000256" key="3">
    <source>
        <dbReference type="SAM" id="MobiDB-lite"/>
    </source>
</evidence>
<evidence type="ECO:0000269" key="4">
    <source>
    </source>
</evidence>
<evidence type="ECO:0000305" key="5"/>
<proteinExistence type="inferred from homology"/>
<gene>
    <name type="primary">mrpl40</name>
    <name type="ORF">SPAC4F8.02c</name>
    <name type="ORF">SPAC644.02</name>
</gene>
<organism>
    <name type="scientific">Schizosaccharomyces pombe (strain 972 / ATCC 24843)</name>
    <name type="common">Fission yeast</name>
    <dbReference type="NCBI Taxonomy" id="284812"/>
    <lineage>
        <taxon>Eukaryota</taxon>
        <taxon>Fungi</taxon>
        <taxon>Dikarya</taxon>
        <taxon>Ascomycota</taxon>
        <taxon>Taphrinomycotina</taxon>
        <taxon>Schizosaccharomycetes</taxon>
        <taxon>Schizosaccharomycetales</taxon>
        <taxon>Schizosaccharomycetaceae</taxon>
        <taxon>Schizosaccharomyces</taxon>
    </lineage>
</organism>
<comment type="function">
    <text evidence="1">Component of the mitochondrial ribosome (mitoribosome), a dedicated translation machinery responsible for the synthesis of mitochondrial genome-encoded proteins, including at least some of the essential transmembrane subunits of the mitochondrial respiratory chain. The mitoribosomes are attached to the mitochondrial inner membrane and translation products are cotranslationally integrated into the membrane.</text>
</comment>
<comment type="subunit">
    <text evidence="1">Component of the mitochondrial large ribosomal subunit (mt-LSU). Mature yeast 74S mitochondrial ribosomes consist of a small (37S) and a large (54S) subunit. The 37S small subunit contains a 15S ribosomal RNA (15S mt-rRNA) and at least 32 different proteins. The 54S large subunit contains a 21S rRNA (21S mt-rRNA) and at least 45 different proteins. uL24m forms the wall of the exit tunnel.</text>
</comment>
<comment type="subcellular location">
    <subcellularLocation>
        <location evidence="4">Mitochondrion</location>
    </subcellularLocation>
</comment>
<comment type="similarity">
    <text evidence="5">Belongs to the universal ribosomal protein uL24 family.</text>
</comment>
<sequence>MRDLRKLIPRLRGPGTNVLKMKKPLPLHMRTKIREHLNKSDPTVKDDKSAKPELPFGKPADRVPFWHIFKGDYVYVHQGPLKGKWGRVVETNKYTNGITIEGVNVRSVKVPIFLLRNKPEDNQDPVIDIAHEVHYANVRLLAHAKTDAGEPVLIPVKLKKHSSTNLRSIIRPNIEGVQIHTIHLPRPKTEDKPKDPEGKLDTKNPVVSKVTWSPSLSEPPLPPFAIGDLRANWSRRLDRIWGYKKNNDDFTEIAKDLVRAETAAEDLIKKPISPNTYSD</sequence>
<dbReference type="EMBL" id="CU329670">
    <property type="protein sequence ID" value="CAB11049.1"/>
    <property type="molecule type" value="Genomic_DNA"/>
</dbReference>
<dbReference type="PIR" id="T38832">
    <property type="entry name" value="T38832"/>
</dbReference>
<dbReference type="RefSeq" id="NP_593870.1">
    <property type="nucleotide sequence ID" value="NM_001019299.2"/>
</dbReference>
<dbReference type="BioGRID" id="279867">
    <property type="interactions" value="1"/>
</dbReference>
<dbReference type="ComplexPortal" id="CPX-10323">
    <property type="entry name" value="54S mitochondrial large ribosomal subunit"/>
</dbReference>
<dbReference type="FunCoup" id="O14178">
    <property type="interactions" value="374"/>
</dbReference>
<dbReference type="STRING" id="284812.O14178"/>
<dbReference type="iPTMnet" id="O14178"/>
<dbReference type="PaxDb" id="4896-SPAC4F8.02c.1"/>
<dbReference type="EnsemblFungi" id="SPAC4F8.02c.1">
    <property type="protein sequence ID" value="SPAC4F8.02c.1:pep"/>
    <property type="gene ID" value="SPAC4F8.02c"/>
</dbReference>
<dbReference type="GeneID" id="2543447"/>
<dbReference type="KEGG" id="spo:2543447"/>
<dbReference type="PomBase" id="SPAC4F8.02c">
    <property type="gene designation" value="mrpl40"/>
</dbReference>
<dbReference type="VEuPathDB" id="FungiDB:SPAC4F8.02c"/>
<dbReference type="eggNOG" id="ENOG502QUDZ">
    <property type="taxonomic scope" value="Eukaryota"/>
</dbReference>
<dbReference type="HOGENOM" id="CLU_990976_0_0_1"/>
<dbReference type="InParanoid" id="O14178"/>
<dbReference type="OMA" id="RAWAYNK"/>
<dbReference type="PRO" id="PR:O14178"/>
<dbReference type="Proteomes" id="UP000002485">
    <property type="component" value="Chromosome I"/>
</dbReference>
<dbReference type="GO" id="GO:0005762">
    <property type="term" value="C:mitochondrial large ribosomal subunit"/>
    <property type="evidence" value="ECO:0000250"/>
    <property type="project" value="PomBase"/>
</dbReference>
<dbReference type="GO" id="GO:0005739">
    <property type="term" value="C:mitochondrion"/>
    <property type="evidence" value="ECO:0007005"/>
    <property type="project" value="PomBase"/>
</dbReference>
<dbReference type="GO" id="GO:0003723">
    <property type="term" value="F:RNA binding"/>
    <property type="evidence" value="ECO:0007669"/>
    <property type="project" value="InterPro"/>
</dbReference>
<dbReference type="GO" id="GO:0003735">
    <property type="term" value="F:structural constituent of ribosome"/>
    <property type="evidence" value="ECO:0000250"/>
    <property type="project" value="PomBase"/>
</dbReference>
<dbReference type="GO" id="GO:0032543">
    <property type="term" value="P:mitochondrial translation"/>
    <property type="evidence" value="ECO:0000250"/>
    <property type="project" value="PomBase"/>
</dbReference>
<dbReference type="GO" id="GO:0006412">
    <property type="term" value="P:translation"/>
    <property type="evidence" value="ECO:0000318"/>
    <property type="project" value="GO_Central"/>
</dbReference>
<dbReference type="CDD" id="cd06089">
    <property type="entry name" value="KOW_RPL26"/>
    <property type="match status" value="1"/>
</dbReference>
<dbReference type="Gene3D" id="2.30.30.30">
    <property type="match status" value="1"/>
</dbReference>
<dbReference type="InterPro" id="IPR005824">
    <property type="entry name" value="KOW"/>
</dbReference>
<dbReference type="InterPro" id="IPR014722">
    <property type="entry name" value="Rib_uL2_dom2"/>
</dbReference>
<dbReference type="InterPro" id="IPR003256">
    <property type="entry name" value="Ribosomal_uL24"/>
</dbReference>
<dbReference type="InterPro" id="IPR041988">
    <property type="entry name" value="Ribosomal_uL24_KOW"/>
</dbReference>
<dbReference type="InterPro" id="IPR008991">
    <property type="entry name" value="Translation_prot_SH3-like_sf"/>
</dbReference>
<dbReference type="PANTHER" id="PTHR12903">
    <property type="entry name" value="MITOCHONDRIAL RIBOSOMAL PROTEIN L24"/>
    <property type="match status" value="1"/>
</dbReference>
<dbReference type="Pfam" id="PF22682">
    <property type="entry name" value="Ribosomal_uL24m-like"/>
    <property type="match status" value="1"/>
</dbReference>
<dbReference type="SMART" id="SM00739">
    <property type="entry name" value="KOW"/>
    <property type="match status" value="1"/>
</dbReference>
<dbReference type="SUPFAM" id="SSF50104">
    <property type="entry name" value="Translation proteins SH3-like domain"/>
    <property type="match status" value="1"/>
</dbReference>
<keyword id="KW-0496">Mitochondrion</keyword>
<keyword id="KW-1185">Reference proteome</keyword>
<keyword id="KW-0687">Ribonucleoprotein</keyword>
<keyword id="KW-0689">Ribosomal protein</keyword>
<keyword id="KW-0809">Transit peptide</keyword>
<accession>O14178</accession>
<protein>
    <recommendedName>
        <fullName evidence="5">Large ribosomal subunit protein uL24m</fullName>
    </recommendedName>
    <alternativeName>
        <fullName>54S ribosomal protein L40, mitochondrial</fullName>
    </alternativeName>
</protein>
<reference key="1">
    <citation type="journal article" date="2002" name="Nature">
        <title>The genome sequence of Schizosaccharomyces pombe.</title>
        <authorList>
            <person name="Wood V."/>
            <person name="Gwilliam R."/>
            <person name="Rajandream M.A."/>
            <person name="Lyne M.H."/>
            <person name="Lyne R."/>
            <person name="Stewart A."/>
            <person name="Sgouros J.G."/>
            <person name="Peat N."/>
            <person name="Hayles J."/>
            <person name="Baker S.G."/>
            <person name="Basham D."/>
            <person name="Bowman S."/>
            <person name="Brooks K."/>
            <person name="Brown D."/>
            <person name="Brown S."/>
            <person name="Chillingworth T."/>
            <person name="Churcher C.M."/>
            <person name="Collins M."/>
            <person name="Connor R."/>
            <person name="Cronin A."/>
            <person name="Davis P."/>
            <person name="Feltwell T."/>
            <person name="Fraser A."/>
            <person name="Gentles S."/>
            <person name="Goble A."/>
            <person name="Hamlin N."/>
            <person name="Harris D.E."/>
            <person name="Hidalgo J."/>
            <person name="Hodgson G."/>
            <person name="Holroyd S."/>
            <person name="Hornsby T."/>
            <person name="Howarth S."/>
            <person name="Huckle E.J."/>
            <person name="Hunt S."/>
            <person name="Jagels K."/>
            <person name="James K.D."/>
            <person name="Jones L."/>
            <person name="Jones M."/>
            <person name="Leather S."/>
            <person name="McDonald S."/>
            <person name="McLean J."/>
            <person name="Mooney P."/>
            <person name="Moule S."/>
            <person name="Mungall K.L."/>
            <person name="Murphy L.D."/>
            <person name="Niblett D."/>
            <person name="Odell C."/>
            <person name="Oliver K."/>
            <person name="O'Neil S."/>
            <person name="Pearson D."/>
            <person name="Quail M.A."/>
            <person name="Rabbinowitsch E."/>
            <person name="Rutherford K.M."/>
            <person name="Rutter S."/>
            <person name="Saunders D."/>
            <person name="Seeger K."/>
            <person name="Sharp S."/>
            <person name="Skelton J."/>
            <person name="Simmonds M.N."/>
            <person name="Squares R."/>
            <person name="Squares S."/>
            <person name="Stevens K."/>
            <person name="Taylor K."/>
            <person name="Taylor R.G."/>
            <person name="Tivey A."/>
            <person name="Walsh S.V."/>
            <person name="Warren T."/>
            <person name="Whitehead S."/>
            <person name="Woodward J.R."/>
            <person name="Volckaert G."/>
            <person name="Aert R."/>
            <person name="Robben J."/>
            <person name="Grymonprez B."/>
            <person name="Weltjens I."/>
            <person name="Vanstreels E."/>
            <person name="Rieger M."/>
            <person name="Schaefer M."/>
            <person name="Mueller-Auer S."/>
            <person name="Gabel C."/>
            <person name="Fuchs M."/>
            <person name="Duesterhoeft A."/>
            <person name="Fritzc C."/>
            <person name="Holzer E."/>
            <person name="Moestl D."/>
            <person name="Hilbert H."/>
            <person name="Borzym K."/>
            <person name="Langer I."/>
            <person name="Beck A."/>
            <person name="Lehrach H."/>
            <person name="Reinhardt R."/>
            <person name="Pohl T.M."/>
            <person name="Eger P."/>
            <person name="Zimmermann W."/>
            <person name="Wedler H."/>
            <person name="Wambutt R."/>
            <person name="Purnelle B."/>
            <person name="Goffeau A."/>
            <person name="Cadieu E."/>
            <person name="Dreano S."/>
            <person name="Gloux S."/>
            <person name="Lelaure V."/>
            <person name="Mottier S."/>
            <person name="Galibert F."/>
            <person name="Aves S.J."/>
            <person name="Xiang Z."/>
            <person name="Hunt C."/>
            <person name="Moore K."/>
            <person name="Hurst S.M."/>
            <person name="Lucas M."/>
            <person name="Rochet M."/>
            <person name="Gaillardin C."/>
            <person name="Tallada V.A."/>
            <person name="Garzon A."/>
            <person name="Thode G."/>
            <person name="Daga R.R."/>
            <person name="Cruzado L."/>
            <person name="Jimenez J."/>
            <person name="Sanchez M."/>
            <person name="del Rey F."/>
            <person name="Benito J."/>
            <person name="Dominguez A."/>
            <person name="Revuelta J.L."/>
            <person name="Moreno S."/>
            <person name="Armstrong J."/>
            <person name="Forsburg S.L."/>
            <person name="Cerutti L."/>
            <person name="Lowe T."/>
            <person name="McCombie W.R."/>
            <person name="Paulsen I."/>
            <person name="Potashkin J."/>
            <person name="Shpakovski G.V."/>
            <person name="Ussery D."/>
            <person name="Barrell B.G."/>
            <person name="Nurse P."/>
        </authorList>
    </citation>
    <scope>NUCLEOTIDE SEQUENCE [LARGE SCALE GENOMIC DNA]</scope>
    <source>
        <strain>972 / ATCC 24843</strain>
    </source>
</reference>
<reference key="2">
    <citation type="journal article" date="2006" name="Nat. Biotechnol.">
        <title>ORFeome cloning and global analysis of protein localization in the fission yeast Schizosaccharomyces pombe.</title>
        <authorList>
            <person name="Matsuyama A."/>
            <person name="Arai R."/>
            <person name="Yashiroda Y."/>
            <person name="Shirai A."/>
            <person name="Kamata A."/>
            <person name="Sekido S."/>
            <person name="Kobayashi Y."/>
            <person name="Hashimoto A."/>
            <person name="Hamamoto M."/>
            <person name="Hiraoka Y."/>
            <person name="Horinouchi S."/>
            <person name="Yoshida M."/>
        </authorList>
    </citation>
    <scope>SUBCELLULAR LOCATION [LARGE SCALE ANALYSIS]</scope>
</reference>